<keyword id="KW-0067">ATP-binding</keyword>
<keyword id="KW-0119">Carbohydrate metabolism</keyword>
<keyword id="KW-0418">Kinase</keyword>
<keyword id="KW-0511">Multifunctional enzyme</keyword>
<keyword id="KW-0547">Nucleotide-binding</keyword>
<keyword id="KW-0548">Nucleotidyltransferase</keyword>
<keyword id="KW-0808">Transferase</keyword>
<evidence type="ECO:0000255" key="1">
    <source>
        <dbReference type="HAMAP-Rule" id="MF_01603"/>
    </source>
</evidence>
<gene>
    <name evidence="1" type="primary">hldE</name>
    <name type="ordered locus">amb0778</name>
</gene>
<dbReference type="EC" id="2.7.1.167" evidence="1"/>
<dbReference type="EC" id="2.7.7.70" evidence="1"/>
<dbReference type="EMBL" id="AP007255">
    <property type="protein sequence ID" value="BAE49582.1"/>
    <property type="molecule type" value="Genomic_DNA"/>
</dbReference>
<dbReference type="RefSeq" id="WP_011383221.1">
    <property type="nucleotide sequence ID" value="NC_007626.1"/>
</dbReference>
<dbReference type="SMR" id="Q2W993"/>
<dbReference type="STRING" id="342108.amb0778"/>
<dbReference type="KEGG" id="mag:amb0778"/>
<dbReference type="HOGENOM" id="CLU_021150_2_1_5"/>
<dbReference type="OrthoDB" id="9802794at2"/>
<dbReference type="UniPathway" id="UPA00356">
    <property type="reaction ID" value="UER00437"/>
</dbReference>
<dbReference type="UniPathway" id="UPA00356">
    <property type="reaction ID" value="UER00439"/>
</dbReference>
<dbReference type="Proteomes" id="UP000007058">
    <property type="component" value="Chromosome"/>
</dbReference>
<dbReference type="GO" id="GO:0005829">
    <property type="term" value="C:cytosol"/>
    <property type="evidence" value="ECO:0007669"/>
    <property type="project" value="TreeGrafter"/>
</dbReference>
<dbReference type="GO" id="GO:0005524">
    <property type="term" value="F:ATP binding"/>
    <property type="evidence" value="ECO:0007669"/>
    <property type="project" value="UniProtKB-UniRule"/>
</dbReference>
<dbReference type="GO" id="GO:0033785">
    <property type="term" value="F:heptose 7-phosphate kinase activity"/>
    <property type="evidence" value="ECO:0007669"/>
    <property type="project" value="UniProtKB-UniRule"/>
</dbReference>
<dbReference type="GO" id="GO:0033786">
    <property type="term" value="F:heptose-1-phosphate adenylyltransferase activity"/>
    <property type="evidence" value="ECO:0007669"/>
    <property type="project" value="UniProtKB-UniRule"/>
</dbReference>
<dbReference type="GO" id="GO:0016773">
    <property type="term" value="F:phosphotransferase activity, alcohol group as acceptor"/>
    <property type="evidence" value="ECO:0007669"/>
    <property type="project" value="InterPro"/>
</dbReference>
<dbReference type="GO" id="GO:0097171">
    <property type="term" value="P:ADP-L-glycero-beta-D-manno-heptose biosynthetic process"/>
    <property type="evidence" value="ECO:0007669"/>
    <property type="project" value="UniProtKB-UniPathway"/>
</dbReference>
<dbReference type="CDD" id="cd01172">
    <property type="entry name" value="RfaE_like"/>
    <property type="match status" value="1"/>
</dbReference>
<dbReference type="FunFam" id="3.40.1190.20:FF:000002">
    <property type="entry name" value="Bifunctional protein HldE"/>
    <property type="match status" value="1"/>
</dbReference>
<dbReference type="Gene3D" id="3.40.1190.20">
    <property type="match status" value="1"/>
</dbReference>
<dbReference type="Gene3D" id="3.40.50.620">
    <property type="entry name" value="HUPs"/>
    <property type="match status" value="1"/>
</dbReference>
<dbReference type="HAMAP" id="MF_01603">
    <property type="entry name" value="HldE"/>
    <property type="match status" value="1"/>
</dbReference>
<dbReference type="InterPro" id="IPR023030">
    <property type="entry name" value="Bifunc_HldE"/>
</dbReference>
<dbReference type="InterPro" id="IPR004821">
    <property type="entry name" value="Cyt_trans-like"/>
</dbReference>
<dbReference type="InterPro" id="IPR011611">
    <property type="entry name" value="PfkB_dom"/>
</dbReference>
<dbReference type="InterPro" id="IPR011913">
    <property type="entry name" value="RfaE_dom_I"/>
</dbReference>
<dbReference type="InterPro" id="IPR011914">
    <property type="entry name" value="RfaE_dom_II"/>
</dbReference>
<dbReference type="InterPro" id="IPR029056">
    <property type="entry name" value="Ribokinase-like"/>
</dbReference>
<dbReference type="InterPro" id="IPR014729">
    <property type="entry name" value="Rossmann-like_a/b/a_fold"/>
</dbReference>
<dbReference type="NCBIfam" id="TIGR00125">
    <property type="entry name" value="cyt_tran_rel"/>
    <property type="match status" value="1"/>
</dbReference>
<dbReference type="NCBIfam" id="TIGR02198">
    <property type="entry name" value="rfaE_dom_I"/>
    <property type="match status" value="1"/>
</dbReference>
<dbReference type="NCBIfam" id="TIGR02199">
    <property type="entry name" value="rfaE_dom_II"/>
    <property type="match status" value="1"/>
</dbReference>
<dbReference type="PANTHER" id="PTHR46969">
    <property type="entry name" value="BIFUNCTIONAL PROTEIN HLDE"/>
    <property type="match status" value="1"/>
</dbReference>
<dbReference type="PANTHER" id="PTHR46969:SF1">
    <property type="entry name" value="BIFUNCTIONAL PROTEIN HLDE"/>
    <property type="match status" value="1"/>
</dbReference>
<dbReference type="Pfam" id="PF01467">
    <property type="entry name" value="CTP_transf_like"/>
    <property type="match status" value="1"/>
</dbReference>
<dbReference type="Pfam" id="PF00294">
    <property type="entry name" value="PfkB"/>
    <property type="match status" value="1"/>
</dbReference>
<dbReference type="SUPFAM" id="SSF52374">
    <property type="entry name" value="Nucleotidylyl transferase"/>
    <property type="match status" value="1"/>
</dbReference>
<dbReference type="SUPFAM" id="SSF53613">
    <property type="entry name" value="Ribokinase-like"/>
    <property type="match status" value="1"/>
</dbReference>
<name>HLDE_PARM1</name>
<sequence length="488" mass="51418">MTELSALVERVEKLRGTMVLCVGDAMLDRFVYGSVERISPEAPIPVLCIERETAMLGGAGNVVRNLVAVGAEPAFVSVVGDDTAGREVTRLVGEHGEIDPCIVVEPGRQTTIKTRFFASHQQLLRADRESRSPVGEAIRAQLLTRIERLLPKAGVMVLSDYGKGVLAEPIAIELIRRAKAAGKQVIVDPKGTDYTIYAGATVVTPNRKELHEATGQAVDSDEQVVAAARQLIDSCGFEAVLVTRSQDGMTLVRADGQIDHLPAEAREVFDVSGAGDTVVATLAAALASGATLPEAAHLANVAAGIVVGKVGTAVAYGDELVVALHREDLTLGEAKIVPVTAAAEVVDRWRRKGQKVGFTNGCFDLLHPGHVSILAQAKGACDKLVVGLNSDASVQRLKGPTRPVQSEASRATVLSSLATVDLVVIFGEDTPLEVIGTLKPDVLVKGADYTIDKVVGADLVQSWGGKVVLAELVNGQSTTNTIKKMNGN</sequence>
<protein>
    <recommendedName>
        <fullName evidence="1">Bifunctional protein HldE</fullName>
    </recommendedName>
    <domain>
        <recommendedName>
            <fullName evidence="1">D-beta-D-heptose 7-phosphate kinase</fullName>
            <ecNumber evidence="1">2.7.1.167</ecNumber>
        </recommendedName>
        <alternativeName>
            <fullName evidence="1">D-beta-D-heptose 7-phosphotransferase</fullName>
        </alternativeName>
        <alternativeName>
            <fullName evidence="1">D-glycero-beta-D-manno-heptose-7-phosphate kinase</fullName>
        </alternativeName>
    </domain>
    <domain>
        <recommendedName>
            <fullName evidence="1">D-beta-D-heptose 1-phosphate adenylyltransferase</fullName>
            <ecNumber evidence="1">2.7.7.70</ecNumber>
        </recommendedName>
        <alternativeName>
            <fullName evidence="1">D-glycero-beta-D-manno-heptose 1-phosphate adenylyltransferase</fullName>
        </alternativeName>
    </domain>
</protein>
<organism>
    <name type="scientific">Paramagnetospirillum magneticum (strain ATCC 700264 / AMB-1)</name>
    <name type="common">Magnetospirillum magneticum</name>
    <dbReference type="NCBI Taxonomy" id="342108"/>
    <lineage>
        <taxon>Bacteria</taxon>
        <taxon>Pseudomonadati</taxon>
        <taxon>Pseudomonadota</taxon>
        <taxon>Alphaproteobacteria</taxon>
        <taxon>Rhodospirillales</taxon>
        <taxon>Magnetospirillaceae</taxon>
        <taxon>Paramagnetospirillum</taxon>
    </lineage>
</organism>
<comment type="function">
    <text evidence="1">Catalyzes the phosphorylation of D-glycero-D-manno-heptose 7-phosphate at the C-1 position to selectively form D-glycero-beta-D-manno-heptose-1,7-bisphosphate.</text>
</comment>
<comment type="function">
    <text evidence="1">Catalyzes the ADP transfer from ATP to D-glycero-beta-D-manno-heptose 1-phosphate, yielding ADP-D-glycero-beta-D-manno-heptose.</text>
</comment>
<comment type="catalytic activity">
    <reaction evidence="1">
        <text>D-glycero-beta-D-manno-heptose 7-phosphate + ATP = D-glycero-beta-D-manno-heptose 1,7-bisphosphate + ADP + H(+)</text>
        <dbReference type="Rhea" id="RHEA:27473"/>
        <dbReference type="ChEBI" id="CHEBI:15378"/>
        <dbReference type="ChEBI" id="CHEBI:30616"/>
        <dbReference type="ChEBI" id="CHEBI:60204"/>
        <dbReference type="ChEBI" id="CHEBI:60208"/>
        <dbReference type="ChEBI" id="CHEBI:456216"/>
        <dbReference type="EC" id="2.7.1.167"/>
    </reaction>
</comment>
<comment type="catalytic activity">
    <reaction evidence="1">
        <text>D-glycero-beta-D-manno-heptose 1-phosphate + ATP + H(+) = ADP-D-glycero-beta-D-manno-heptose + diphosphate</text>
        <dbReference type="Rhea" id="RHEA:27465"/>
        <dbReference type="ChEBI" id="CHEBI:15378"/>
        <dbReference type="ChEBI" id="CHEBI:30616"/>
        <dbReference type="ChEBI" id="CHEBI:33019"/>
        <dbReference type="ChEBI" id="CHEBI:59967"/>
        <dbReference type="ChEBI" id="CHEBI:61593"/>
        <dbReference type="EC" id="2.7.7.70"/>
    </reaction>
</comment>
<comment type="pathway">
    <text evidence="1">Nucleotide-sugar biosynthesis; ADP-L-glycero-beta-D-manno-heptose biosynthesis; ADP-L-glycero-beta-D-manno-heptose from D-glycero-beta-D-manno-heptose 7-phosphate: step 1/4.</text>
</comment>
<comment type="pathway">
    <text evidence="1">Nucleotide-sugar biosynthesis; ADP-L-glycero-beta-D-manno-heptose biosynthesis; ADP-L-glycero-beta-D-manno-heptose from D-glycero-beta-D-manno-heptose 7-phosphate: step 3/4.</text>
</comment>
<comment type="subunit">
    <text evidence="1">Homodimer.</text>
</comment>
<comment type="similarity">
    <text evidence="1">In the N-terminal section; belongs to the carbohydrate kinase PfkB family.</text>
</comment>
<comment type="similarity">
    <text evidence="1">In the C-terminal section; belongs to the cytidylyltransferase family.</text>
</comment>
<feature type="chain" id="PRO_0000255764" description="Bifunctional protein HldE">
    <location>
        <begin position="1"/>
        <end position="488"/>
    </location>
</feature>
<feature type="region of interest" description="Ribokinase">
    <location>
        <begin position="1"/>
        <end position="331"/>
    </location>
</feature>
<feature type="region of interest" description="Cytidylyltransferase">
    <location>
        <begin position="358"/>
        <end position="488"/>
    </location>
</feature>
<feature type="active site" evidence="1">
    <location>
        <position position="276"/>
    </location>
</feature>
<feature type="binding site" evidence="1">
    <location>
        <begin position="206"/>
        <end position="209"/>
    </location>
    <ligand>
        <name>ATP</name>
        <dbReference type="ChEBI" id="CHEBI:30616"/>
    </ligand>
</feature>
<proteinExistence type="inferred from homology"/>
<accession>Q2W993</accession>
<reference key="1">
    <citation type="journal article" date="2005" name="DNA Res.">
        <title>Complete genome sequence of the facultative anaerobic magnetotactic bacterium Magnetospirillum sp. strain AMB-1.</title>
        <authorList>
            <person name="Matsunaga T."/>
            <person name="Okamura Y."/>
            <person name="Fukuda Y."/>
            <person name="Wahyudi A.T."/>
            <person name="Murase Y."/>
            <person name="Takeyama H."/>
        </authorList>
    </citation>
    <scope>NUCLEOTIDE SEQUENCE [LARGE SCALE GENOMIC DNA]</scope>
    <source>
        <strain>ATCC 700264 / AMB-1</strain>
    </source>
</reference>